<protein>
    <recommendedName>
        <fullName>Uncharacterized protein L147</fullName>
    </recommendedName>
</protein>
<feature type="chain" id="PRO_0000251106" description="Uncharacterized protein L147">
    <location>
        <begin position="1"/>
        <end position="279"/>
    </location>
</feature>
<reference key="1">
    <citation type="journal article" date="2004" name="Science">
        <title>The 1.2-megabase genome sequence of Mimivirus.</title>
        <authorList>
            <person name="Raoult D."/>
            <person name="Audic S."/>
            <person name="Robert C."/>
            <person name="Abergel C."/>
            <person name="Renesto P."/>
            <person name="Ogata H."/>
            <person name="La Scola B."/>
            <person name="Susan M."/>
            <person name="Claverie J.-M."/>
        </authorList>
    </citation>
    <scope>NUCLEOTIDE SEQUENCE [LARGE SCALE GENOMIC DNA]</scope>
    <source>
        <strain>Rowbotham-Bradford</strain>
    </source>
</reference>
<name>YL147_MIMIV</name>
<organismHost>
    <name type="scientific">Acanthamoeba polyphaga</name>
    <name type="common">Amoeba</name>
    <dbReference type="NCBI Taxonomy" id="5757"/>
</organismHost>
<keyword id="KW-1185">Reference proteome</keyword>
<sequence>MESELRKLIRPIIENKISNFLNSPEYQFLEPHVSKDITDIIDEAPLPTIRSNSCNCEDDVCPHKSVINPLYFYVLNSYISKHITYRKKFHEAFNPKFFPLHFHDTLKNSFPQKNFDVYHRLSIKFSVQKEETFELNFDYDLFEGMEFSPDTEYPVIVSLECNGLISHITIDKGSFLADNFYIPMVLIPYSRIKLMFNKNINGRMICGYFSNVIRSDLCLQKKDLIDDKIVLWFKFDKDYALQINGGTLMFFDDLETFGPRKQIEVIRLRSSNNPDNDKN</sequence>
<accession>Q5URA1</accession>
<dbReference type="EMBL" id="AY653733">
    <property type="protein sequence ID" value="AAV50422.1"/>
    <property type="molecule type" value="Genomic_DNA"/>
</dbReference>
<dbReference type="KEGG" id="vg:9924747"/>
<dbReference type="Proteomes" id="UP000001134">
    <property type="component" value="Genome"/>
</dbReference>
<organism>
    <name type="scientific">Acanthamoeba polyphaga mimivirus</name>
    <name type="common">APMV</name>
    <dbReference type="NCBI Taxonomy" id="212035"/>
    <lineage>
        <taxon>Viruses</taxon>
        <taxon>Varidnaviria</taxon>
        <taxon>Bamfordvirae</taxon>
        <taxon>Nucleocytoviricota</taxon>
        <taxon>Megaviricetes</taxon>
        <taxon>Imitervirales</taxon>
        <taxon>Mimiviridae</taxon>
        <taxon>Megamimivirinae</taxon>
        <taxon>Mimivirus</taxon>
        <taxon>Mimivirus bradfordmassiliense</taxon>
    </lineage>
</organism>
<gene>
    <name type="ordered locus">MIMI_L147</name>
</gene>
<proteinExistence type="predicted"/>